<organism>
    <name type="scientific">Colletotrichum graminicola (strain M1.001 / M2 / FGSC 10212)</name>
    <name type="common">Maize anthracnose fungus</name>
    <name type="synonym">Glomerella graminicola</name>
    <dbReference type="NCBI Taxonomy" id="645133"/>
    <lineage>
        <taxon>Eukaryota</taxon>
        <taxon>Fungi</taxon>
        <taxon>Dikarya</taxon>
        <taxon>Ascomycota</taxon>
        <taxon>Pezizomycotina</taxon>
        <taxon>Sordariomycetes</taxon>
        <taxon>Hypocreomycetidae</taxon>
        <taxon>Glomerellales</taxon>
        <taxon>Glomerellaceae</taxon>
        <taxon>Colletotrichum</taxon>
        <taxon>Colletotrichum graminicola species complex</taxon>
    </lineage>
</organism>
<dbReference type="EC" id="3.4.11.18" evidence="1"/>
<dbReference type="EMBL" id="GG697387">
    <property type="protein sequence ID" value="EFQ35079.1"/>
    <property type="molecule type" value="Genomic_DNA"/>
</dbReference>
<dbReference type="RefSeq" id="XP_008099099.1">
    <property type="nucleotide sequence ID" value="XM_008100908.1"/>
</dbReference>
<dbReference type="SMR" id="E3QW41"/>
<dbReference type="STRING" id="645133.E3QW41"/>
<dbReference type="EnsemblFungi" id="EFQ35079">
    <property type="protein sequence ID" value="EFQ35079"/>
    <property type="gene ID" value="GLRG_10223"/>
</dbReference>
<dbReference type="GeneID" id="24415588"/>
<dbReference type="VEuPathDB" id="FungiDB:GLRG_10223"/>
<dbReference type="eggNOG" id="KOG2775">
    <property type="taxonomic scope" value="Eukaryota"/>
</dbReference>
<dbReference type="HOGENOM" id="CLU_015857_7_1_1"/>
<dbReference type="OrthoDB" id="7848262at2759"/>
<dbReference type="Proteomes" id="UP000008782">
    <property type="component" value="Unassembled WGS sequence"/>
</dbReference>
<dbReference type="GO" id="GO:0005737">
    <property type="term" value="C:cytoplasm"/>
    <property type="evidence" value="ECO:0007669"/>
    <property type="project" value="UniProtKB-SubCell"/>
</dbReference>
<dbReference type="GO" id="GO:0004239">
    <property type="term" value="F:initiator methionyl aminopeptidase activity"/>
    <property type="evidence" value="ECO:0007669"/>
    <property type="project" value="UniProtKB-UniRule"/>
</dbReference>
<dbReference type="GO" id="GO:0046872">
    <property type="term" value="F:metal ion binding"/>
    <property type="evidence" value="ECO:0007669"/>
    <property type="project" value="UniProtKB-UniRule"/>
</dbReference>
<dbReference type="GO" id="GO:0070006">
    <property type="term" value="F:metalloaminopeptidase activity"/>
    <property type="evidence" value="ECO:0007669"/>
    <property type="project" value="UniProtKB-UniRule"/>
</dbReference>
<dbReference type="GO" id="GO:0006508">
    <property type="term" value="P:proteolysis"/>
    <property type="evidence" value="ECO:0007669"/>
    <property type="project" value="UniProtKB-KW"/>
</dbReference>
<dbReference type="CDD" id="cd01088">
    <property type="entry name" value="MetAP2"/>
    <property type="match status" value="1"/>
</dbReference>
<dbReference type="Gene3D" id="3.90.230.10">
    <property type="entry name" value="Creatinase/methionine aminopeptidase superfamily"/>
    <property type="match status" value="1"/>
</dbReference>
<dbReference type="Gene3D" id="1.10.10.10">
    <property type="entry name" value="Winged helix-like DNA-binding domain superfamily/Winged helix DNA-binding domain"/>
    <property type="match status" value="1"/>
</dbReference>
<dbReference type="HAMAP" id="MF_03175">
    <property type="entry name" value="MetAP_2_euk"/>
    <property type="match status" value="1"/>
</dbReference>
<dbReference type="InterPro" id="IPR036005">
    <property type="entry name" value="Creatinase/aminopeptidase-like"/>
</dbReference>
<dbReference type="InterPro" id="IPR050247">
    <property type="entry name" value="Met_Aminopeptidase_Type2"/>
</dbReference>
<dbReference type="InterPro" id="IPR000994">
    <property type="entry name" value="Pept_M24"/>
</dbReference>
<dbReference type="InterPro" id="IPR001714">
    <property type="entry name" value="Pept_M24_MAP"/>
</dbReference>
<dbReference type="InterPro" id="IPR002468">
    <property type="entry name" value="Pept_M24A_MAP2"/>
</dbReference>
<dbReference type="InterPro" id="IPR018349">
    <property type="entry name" value="Pept_M24A_MAP2_BS"/>
</dbReference>
<dbReference type="InterPro" id="IPR036388">
    <property type="entry name" value="WH-like_DNA-bd_sf"/>
</dbReference>
<dbReference type="InterPro" id="IPR036390">
    <property type="entry name" value="WH_DNA-bd_sf"/>
</dbReference>
<dbReference type="NCBIfam" id="TIGR00501">
    <property type="entry name" value="met_pdase_II"/>
    <property type="match status" value="1"/>
</dbReference>
<dbReference type="PANTHER" id="PTHR45777">
    <property type="entry name" value="METHIONINE AMINOPEPTIDASE 2"/>
    <property type="match status" value="1"/>
</dbReference>
<dbReference type="PANTHER" id="PTHR45777:SF2">
    <property type="entry name" value="METHIONINE AMINOPEPTIDASE 2"/>
    <property type="match status" value="1"/>
</dbReference>
<dbReference type="Pfam" id="PF00557">
    <property type="entry name" value="Peptidase_M24"/>
    <property type="match status" value="1"/>
</dbReference>
<dbReference type="PRINTS" id="PR00599">
    <property type="entry name" value="MAPEPTIDASE"/>
</dbReference>
<dbReference type="SUPFAM" id="SSF55920">
    <property type="entry name" value="Creatinase/aminopeptidase"/>
    <property type="match status" value="1"/>
</dbReference>
<dbReference type="SUPFAM" id="SSF46785">
    <property type="entry name" value="Winged helix' DNA-binding domain"/>
    <property type="match status" value="1"/>
</dbReference>
<dbReference type="PROSITE" id="PS01202">
    <property type="entry name" value="MAP_2"/>
    <property type="match status" value="1"/>
</dbReference>
<reference key="1">
    <citation type="journal article" date="2012" name="Nat. Genet.">
        <title>Lifestyle transitions in plant pathogenic Colletotrichum fungi deciphered by genome and transcriptome analyses.</title>
        <authorList>
            <person name="O'Connell R.J."/>
            <person name="Thon M.R."/>
            <person name="Hacquard S."/>
            <person name="Amyotte S.G."/>
            <person name="Kleemann J."/>
            <person name="Torres M.F."/>
            <person name="Damm U."/>
            <person name="Buiate E.A."/>
            <person name="Epstein L."/>
            <person name="Alkan N."/>
            <person name="Altmueller J."/>
            <person name="Alvarado-Balderrama L."/>
            <person name="Bauser C.A."/>
            <person name="Becker C."/>
            <person name="Birren B.W."/>
            <person name="Chen Z."/>
            <person name="Choi J."/>
            <person name="Crouch J.A."/>
            <person name="Duvick J.P."/>
            <person name="Farman M.A."/>
            <person name="Gan P."/>
            <person name="Heiman D."/>
            <person name="Henrissat B."/>
            <person name="Howard R.J."/>
            <person name="Kabbage M."/>
            <person name="Koch C."/>
            <person name="Kracher B."/>
            <person name="Kubo Y."/>
            <person name="Law A.D."/>
            <person name="Lebrun M.-H."/>
            <person name="Lee Y.-H."/>
            <person name="Miyara I."/>
            <person name="Moore N."/>
            <person name="Neumann U."/>
            <person name="Nordstroem K."/>
            <person name="Panaccione D.G."/>
            <person name="Panstruga R."/>
            <person name="Place M."/>
            <person name="Proctor R.H."/>
            <person name="Prusky D."/>
            <person name="Rech G."/>
            <person name="Reinhardt R."/>
            <person name="Rollins J.A."/>
            <person name="Rounsley S."/>
            <person name="Schardl C.L."/>
            <person name="Schwartz D.C."/>
            <person name="Shenoy N."/>
            <person name="Shirasu K."/>
            <person name="Sikhakolli U.R."/>
            <person name="Stueber K."/>
            <person name="Sukno S.A."/>
            <person name="Sweigard J.A."/>
            <person name="Takano Y."/>
            <person name="Takahara H."/>
            <person name="Trail F."/>
            <person name="van der Does H.C."/>
            <person name="Voll L.M."/>
            <person name="Will I."/>
            <person name="Young S."/>
            <person name="Zeng Q."/>
            <person name="Zhang J."/>
            <person name="Zhou S."/>
            <person name="Dickman M.B."/>
            <person name="Schulze-Lefert P."/>
            <person name="Ver Loren van Themaat E."/>
            <person name="Ma L.-J."/>
            <person name="Vaillancourt L.J."/>
        </authorList>
    </citation>
    <scope>NUCLEOTIDE SEQUENCE [LARGE SCALE GENOMIC DNA]</scope>
    <source>
        <strain>M1.001 / M2 / FGSC 10212</strain>
    </source>
</reference>
<protein>
    <recommendedName>
        <fullName evidence="1">Methionine aminopeptidase 2-2</fullName>
        <shortName evidence="1">MAP 2-2</shortName>
        <shortName evidence="1">MetAP 2-2</shortName>
        <ecNumber evidence="1">3.4.11.18</ecNumber>
    </recommendedName>
    <alternativeName>
        <fullName evidence="1">Peptidase M</fullName>
    </alternativeName>
</protein>
<evidence type="ECO:0000255" key="1">
    <source>
        <dbReference type="HAMAP-Rule" id="MF_03175"/>
    </source>
</evidence>
<evidence type="ECO:0000256" key="2">
    <source>
        <dbReference type="SAM" id="MobiDB-lite"/>
    </source>
</evidence>
<sequence length="440" mass="48286">MAAQVPTEALKELNVGGPATNDKAANPTEGNGVDHDSDDSDEEGEEVAAPAAGGAAKKKKKNKKKKKKKSPTAQSDPPRVLMSSLFPNKNYPKGQEEEYRDENLYRTTNEEKRHLDNLNNDFLTDYREAAEIHRQVRQWAQKNIKPGQTLTEIAEGIEDGVRALTGHPGIEEGDAYKGGMGFPCGLSLNHCAAHYTPNAGNKMVLSQGDVMKVDFGVHVNGRIVDSAFTMAFEPQYDNLLAAVKDATNAGVKEAGIDVRVGDVGGVIQEVMESYEVEIDGTTYPVKSIRNLNGHTIERWSIHGTKSVPIVKSNDTTKMEEGDVFAVETFGSTGNGFVREDMEVSHYAKRGEGHAALRLDSAKRLLNVINKNFGTLPFCRRYLDRLGQDKYLLGLNNLVSSGIVEAYPPLCDKKGSYTAQFEHTILLRPTVKEVISRGDDY</sequence>
<name>MAP22_COLGM</name>
<gene>
    <name type="ORF">GLRG_10223</name>
</gene>
<accession>E3QW41</accession>
<feature type="chain" id="PRO_0000407605" description="Methionine aminopeptidase 2-2">
    <location>
        <begin position="1"/>
        <end position="440"/>
    </location>
</feature>
<feature type="region of interest" description="Disordered" evidence="2">
    <location>
        <begin position="1"/>
        <end position="102"/>
    </location>
</feature>
<feature type="compositionally biased region" description="Acidic residues" evidence="2">
    <location>
        <begin position="36"/>
        <end position="46"/>
    </location>
</feature>
<feature type="compositionally biased region" description="Basic residues" evidence="2">
    <location>
        <begin position="56"/>
        <end position="70"/>
    </location>
</feature>
<feature type="binding site" evidence="1">
    <location>
        <position position="194"/>
    </location>
    <ligand>
        <name>substrate</name>
    </ligand>
</feature>
<feature type="binding site" evidence="1">
    <location>
        <position position="214"/>
    </location>
    <ligand>
        <name>a divalent metal cation</name>
        <dbReference type="ChEBI" id="CHEBI:60240"/>
        <label>1</label>
    </ligand>
</feature>
<feature type="binding site" evidence="1">
    <location>
        <position position="225"/>
    </location>
    <ligand>
        <name>a divalent metal cation</name>
        <dbReference type="ChEBI" id="CHEBI:60240"/>
        <label>1</label>
    </ligand>
</feature>
<feature type="binding site" evidence="1">
    <location>
        <position position="225"/>
    </location>
    <ligand>
        <name>a divalent metal cation</name>
        <dbReference type="ChEBI" id="CHEBI:60240"/>
        <label>2</label>
        <note>catalytic</note>
    </ligand>
</feature>
<feature type="binding site" evidence="1">
    <location>
        <position position="294"/>
    </location>
    <ligand>
        <name>a divalent metal cation</name>
        <dbReference type="ChEBI" id="CHEBI:60240"/>
        <label>2</label>
        <note>catalytic</note>
    </ligand>
</feature>
<feature type="binding site" evidence="1">
    <location>
        <position position="302"/>
    </location>
    <ligand>
        <name>substrate</name>
    </ligand>
</feature>
<feature type="binding site" evidence="1">
    <location>
        <position position="327"/>
    </location>
    <ligand>
        <name>a divalent metal cation</name>
        <dbReference type="ChEBI" id="CHEBI:60240"/>
        <label>2</label>
        <note>catalytic</note>
    </ligand>
</feature>
<feature type="binding site" evidence="1">
    <location>
        <position position="421"/>
    </location>
    <ligand>
        <name>a divalent metal cation</name>
        <dbReference type="ChEBI" id="CHEBI:60240"/>
        <label>1</label>
    </ligand>
</feature>
<feature type="binding site" evidence="1">
    <location>
        <position position="421"/>
    </location>
    <ligand>
        <name>a divalent metal cation</name>
        <dbReference type="ChEBI" id="CHEBI:60240"/>
        <label>2</label>
        <note>catalytic</note>
    </ligand>
</feature>
<keyword id="KW-0031">Aminopeptidase</keyword>
<keyword id="KW-0963">Cytoplasm</keyword>
<keyword id="KW-0378">Hydrolase</keyword>
<keyword id="KW-0479">Metal-binding</keyword>
<keyword id="KW-0645">Protease</keyword>
<keyword id="KW-1185">Reference proteome</keyword>
<comment type="function">
    <text evidence="1">Cotranslationally removes the N-terminal methionine from nascent proteins. The N-terminal methionine is often cleaved when the second residue in the primary sequence is small and uncharged (Met-Ala-, Cys, Gly, Pro, Ser, Thr, or Val).</text>
</comment>
<comment type="catalytic activity">
    <reaction evidence="1">
        <text>Release of N-terminal amino acids, preferentially methionine, from peptides and arylamides.</text>
        <dbReference type="EC" id="3.4.11.18"/>
    </reaction>
</comment>
<comment type="cofactor">
    <cofactor evidence="1">
        <name>Co(2+)</name>
        <dbReference type="ChEBI" id="CHEBI:48828"/>
    </cofactor>
    <cofactor evidence="1">
        <name>Zn(2+)</name>
        <dbReference type="ChEBI" id="CHEBI:29105"/>
    </cofactor>
    <cofactor evidence="1">
        <name>Mn(2+)</name>
        <dbReference type="ChEBI" id="CHEBI:29035"/>
    </cofactor>
    <cofactor evidence="1">
        <name>Fe(2+)</name>
        <dbReference type="ChEBI" id="CHEBI:29033"/>
    </cofactor>
    <text evidence="1">Binds 2 divalent metal cations per subunit. Has a high-affinity and a low affinity metal-binding site. The true nature of the physiological cofactor is under debate. The enzyme is active with cobalt, zinc, manganese or divalent iron ions. Most likely, methionine aminopeptidases function as mononuclear Fe(2+)-metalloproteases under physiological conditions, and the catalytically relevant metal-binding site has been assigned to the histidine-containing high-affinity site.</text>
</comment>
<comment type="subcellular location">
    <subcellularLocation>
        <location evidence="1">Cytoplasm</location>
    </subcellularLocation>
</comment>
<comment type="similarity">
    <text evidence="1">Belongs to the peptidase M24A family. Methionine aminopeptidase eukaryotic type 2 subfamily.</text>
</comment>
<proteinExistence type="inferred from homology"/>